<organism>
    <name type="scientific">Photorhabdus laumondii subsp. laumondii (strain DSM 15139 / CIP 105565 / TT01)</name>
    <name type="common">Photorhabdus luminescens subsp. laumondii</name>
    <dbReference type="NCBI Taxonomy" id="243265"/>
    <lineage>
        <taxon>Bacteria</taxon>
        <taxon>Pseudomonadati</taxon>
        <taxon>Pseudomonadota</taxon>
        <taxon>Gammaproteobacteria</taxon>
        <taxon>Enterobacterales</taxon>
        <taxon>Morganellaceae</taxon>
        <taxon>Photorhabdus</taxon>
    </lineage>
</organism>
<keyword id="KW-0998">Cell outer membrane</keyword>
<keyword id="KW-0406">Ion transport</keyword>
<keyword id="KW-0472">Membrane</keyword>
<keyword id="KW-0626">Porin</keyword>
<keyword id="KW-1185">Reference proteome</keyword>
<keyword id="KW-0732">Signal</keyword>
<keyword id="KW-0762">Sugar transport</keyword>
<keyword id="KW-0812">Transmembrane</keyword>
<keyword id="KW-1134">Transmembrane beta strand</keyword>
<keyword id="KW-0813">Transport</keyword>
<sequence length="428" mass="48419">MKSMRILPISLTIMAGLLSIEASAVEFHGYARSGIGWTGSGGEQQCFQSTGAQSKYRLGNECETYAELKLGQELWKDGNKSFYFDTNVAYSVAQKNDWESTDPAFREVNVQAKNVIDWLPGSTLWAGKRFYQRHDVHMIDFYYWDISGPGAGLQDIDLGFSKLALAVTRNTESGGSYGWIASQRKEIPTSNDVYDIRLSGLEVNPGGNLELGFDYGRANARDHYKLDRHASKDGFMFTAEHTQSMLGGFNKFVVQYATDSMTSSNSGHSEGASVNNDGYMLRILNHGAINLAEKWDLMYVAMYQDTDRDNNNGNTWYTVGVRPMYKWTSTMSTLLDIGYDNVKSQRTHDTNDQYKITLAQQWQAGDSIWSRPAIRLFATYAKWNEKWGNANKKDGYIDGMAYRDTATHKFSRGDDDEFTFGAQFEAWW</sequence>
<reference key="1">
    <citation type="journal article" date="2003" name="Nat. Biotechnol.">
        <title>The genome sequence of the entomopathogenic bacterium Photorhabdus luminescens.</title>
        <authorList>
            <person name="Duchaud E."/>
            <person name="Rusniok C."/>
            <person name="Frangeul L."/>
            <person name="Buchrieser C."/>
            <person name="Givaudan A."/>
            <person name="Taourit S."/>
            <person name="Bocs S."/>
            <person name="Boursaux-Eude C."/>
            <person name="Chandler M."/>
            <person name="Charles J.-F."/>
            <person name="Dassa E."/>
            <person name="Derose R."/>
            <person name="Derzelle S."/>
            <person name="Freyssinet G."/>
            <person name="Gaudriault S."/>
            <person name="Medigue C."/>
            <person name="Lanois A."/>
            <person name="Powell K."/>
            <person name="Siguier P."/>
            <person name="Vincent R."/>
            <person name="Wingate V."/>
            <person name="Zouine M."/>
            <person name="Glaser P."/>
            <person name="Boemare N."/>
            <person name="Danchin A."/>
            <person name="Kunst F."/>
        </authorList>
    </citation>
    <scope>NUCLEOTIDE SEQUENCE [LARGE SCALE GENOMIC DNA]</scope>
    <source>
        <strain>DSM 15139 / CIP 105565 / TT01</strain>
    </source>
</reference>
<gene>
    <name evidence="1" type="primary">lamB</name>
    <name type="ordered locus">plu0456</name>
</gene>
<name>LAMB_PHOLL</name>
<proteinExistence type="inferred from homology"/>
<dbReference type="EMBL" id="BX571860">
    <property type="protein sequence ID" value="CAE12751.1"/>
    <property type="molecule type" value="Genomic_DNA"/>
</dbReference>
<dbReference type="RefSeq" id="WP_011144842.1">
    <property type="nucleotide sequence ID" value="NC_005126.1"/>
</dbReference>
<dbReference type="SMR" id="Q7N987"/>
<dbReference type="STRING" id="243265.plu0456"/>
<dbReference type="GeneID" id="48846741"/>
<dbReference type="KEGG" id="plu:plu0456"/>
<dbReference type="eggNOG" id="COG4580">
    <property type="taxonomic scope" value="Bacteria"/>
</dbReference>
<dbReference type="HOGENOM" id="CLU_032473_4_1_6"/>
<dbReference type="OrthoDB" id="106611at2"/>
<dbReference type="Proteomes" id="UP000002514">
    <property type="component" value="Chromosome"/>
</dbReference>
<dbReference type="GO" id="GO:0009279">
    <property type="term" value="C:cell outer membrane"/>
    <property type="evidence" value="ECO:0007669"/>
    <property type="project" value="UniProtKB-SubCell"/>
</dbReference>
<dbReference type="GO" id="GO:0046930">
    <property type="term" value="C:pore complex"/>
    <property type="evidence" value="ECO:0007669"/>
    <property type="project" value="UniProtKB-KW"/>
</dbReference>
<dbReference type="GO" id="GO:0042958">
    <property type="term" value="F:maltodextrin transmembrane transporter activity"/>
    <property type="evidence" value="ECO:0007669"/>
    <property type="project" value="InterPro"/>
</dbReference>
<dbReference type="GO" id="GO:0015481">
    <property type="term" value="F:maltose transporting porin activity"/>
    <property type="evidence" value="ECO:0007669"/>
    <property type="project" value="InterPro"/>
</dbReference>
<dbReference type="GO" id="GO:0006811">
    <property type="term" value="P:monoatomic ion transport"/>
    <property type="evidence" value="ECO:0007669"/>
    <property type="project" value="UniProtKB-KW"/>
</dbReference>
<dbReference type="CDD" id="cd01346">
    <property type="entry name" value="Maltoporin-like"/>
    <property type="match status" value="1"/>
</dbReference>
<dbReference type="Gene3D" id="2.40.170.10">
    <property type="entry name" value="Porin, LamB type"/>
    <property type="match status" value="1"/>
</dbReference>
<dbReference type="HAMAP" id="MF_01301">
    <property type="entry name" value="LamB"/>
    <property type="match status" value="1"/>
</dbReference>
<dbReference type="InterPro" id="IPR050286">
    <property type="entry name" value="G_neg_Bact_CarbUptk_Porin"/>
</dbReference>
<dbReference type="InterPro" id="IPR023738">
    <property type="entry name" value="Maltoporin"/>
</dbReference>
<dbReference type="InterPro" id="IPR003192">
    <property type="entry name" value="Porin_LamB"/>
</dbReference>
<dbReference type="InterPro" id="IPR036998">
    <property type="entry name" value="Porin_LamB_sf"/>
</dbReference>
<dbReference type="NCBIfam" id="NF006860">
    <property type="entry name" value="PRK09360.1"/>
    <property type="match status" value="1"/>
</dbReference>
<dbReference type="PANTHER" id="PTHR38762">
    <property type="entry name" value="CRYPTIC OUTER MEMBRANE PORIN BGLH-RELATED"/>
    <property type="match status" value="1"/>
</dbReference>
<dbReference type="PANTHER" id="PTHR38762:SF1">
    <property type="entry name" value="CRYPTIC OUTER MEMBRANE PORIN BGLH-RELATED"/>
    <property type="match status" value="1"/>
</dbReference>
<dbReference type="Pfam" id="PF02264">
    <property type="entry name" value="LamB"/>
    <property type="match status" value="1"/>
</dbReference>
<dbReference type="SUPFAM" id="SSF56935">
    <property type="entry name" value="Porins"/>
    <property type="match status" value="1"/>
</dbReference>
<evidence type="ECO:0000255" key="1">
    <source>
        <dbReference type="HAMAP-Rule" id="MF_01301"/>
    </source>
</evidence>
<protein>
    <recommendedName>
        <fullName evidence="1">Maltoporin</fullName>
    </recommendedName>
    <alternativeName>
        <fullName evidence="1">Maltose-inducible porin</fullName>
    </alternativeName>
</protein>
<comment type="function">
    <text evidence="1">Involved in the transport of maltose and maltodextrins.</text>
</comment>
<comment type="catalytic activity">
    <reaction evidence="1">
        <text>beta-maltose(in) = beta-maltose(out)</text>
        <dbReference type="Rhea" id="RHEA:29731"/>
        <dbReference type="ChEBI" id="CHEBI:18147"/>
    </reaction>
</comment>
<comment type="subunit">
    <text evidence="1">Homotrimer formed of three 18-stranded antiparallel beta-barrels, containing three independent channels.</text>
</comment>
<comment type="subcellular location">
    <subcellularLocation>
        <location evidence="1">Cell outer membrane</location>
        <topology evidence="1">Multi-pass membrane protein</topology>
    </subcellularLocation>
</comment>
<comment type="induction">
    <text evidence="1">By maltose.</text>
</comment>
<comment type="similarity">
    <text evidence="1">Belongs to the porin LamB (TC 1.B.3) family.</text>
</comment>
<accession>Q7N987</accession>
<feature type="signal peptide" evidence="1">
    <location>
        <begin position="1"/>
        <end position="24"/>
    </location>
</feature>
<feature type="chain" id="PRO_0000228854" description="Maltoporin">
    <location>
        <begin position="25"/>
        <end position="428"/>
    </location>
</feature>
<feature type="site" description="Greasy slide, important in sugar transport" evidence="1">
    <location>
        <position position="30"/>
    </location>
</feature>
<feature type="site" description="Greasy slide, important in sugar transport" evidence="1">
    <location>
        <position position="65"/>
    </location>
</feature>
<feature type="site" description="Greasy slide, important in sugar transport" evidence="1">
    <location>
        <position position="98"/>
    </location>
</feature>
<feature type="site" description="Important in sugar transport" evidence="1">
    <location>
        <position position="142"/>
    </location>
</feature>
<feature type="site" description="Greasy slide, important in sugar transport" evidence="1">
    <location>
        <position position="249"/>
    </location>
</feature>
<feature type="site" description="Greasy slide, important in sugar transport" evidence="1">
    <location>
        <position position="369"/>
    </location>
</feature>
<feature type="site" description="Greasy slide, important in sugar transport" evidence="1">
    <location>
        <position position="427"/>
    </location>
</feature>